<feature type="chain" id="PRO_0000178755" description="Fructose-bisphosphate aldolase">
    <location>
        <begin position="1"/>
        <end position="354"/>
    </location>
</feature>
<feature type="active site" description="Proton donor" evidence="1">
    <location>
        <position position="83"/>
    </location>
</feature>
<feature type="binding site" evidence="1">
    <location>
        <position position="50"/>
    </location>
    <ligand>
        <name>D-glyceraldehyde 3-phosphate</name>
        <dbReference type="ChEBI" id="CHEBI:59776"/>
    </ligand>
</feature>
<feature type="binding site" evidence="1">
    <location>
        <position position="84"/>
    </location>
    <ligand>
        <name>Zn(2+)</name>
        <dbReference type="ChEBI" id="CHEBI:29105"/>
        <label>1</label>
        <note>catalytic</note>
    </ligand>
</feature>
<feature type="binding site" evidence="1">
    <location>
        <position position="105"/>
    </location>
    <ligand>
        <name>Zn(2+)</name>
        <dbReference type="ChEBI" id="CHEBI:29105"/>
        <label>2</label>
    </ligand>
</feature>
<feature type="binding site" evidence="1">
    <location>
        <position position="142"/>
    </location>
    <ligand>
        <name>Zn(2+)</name>
        <dbReference type="ChEBI" id="CHEBI:29105"/>
        <label>2</label>
    </ligand>
</feature>
<feature type="binding site" evidence="1">
    <location>
        <position position="198"/>
    </location>
    <ligand>
        <name>Zn(2+)</name>
        <dbReference type="ChEBI" id="CHEBI:29105"/>
        <label>1</label>
        <note>catalytic</note>
    </ligand>
</feature>
<feature type="binding site" evidence="1">
    <location>
        <position position="199"/>
    </location>
    <ligand>
        <name>dihydroxyacetone phosphate</name>
        <dbReference type="ChEBI" id="CHEBI:57642"/>
    </ligand>
</feature>
<feature type="binding site" evidence="1">
    <location>
        <position position="232"/>
    </location>
    <ligand>
        <name>Zn(2+)</name>
        <dbReference type="ChEBI" id="CHEBI:29105"/>
        <label>1</label>
        <note>catalytic</note>
    </ligand>
</feature>
<feature type="binding site" evidence="1">
    <location>
        <begin position="233"/>
        <end position="235"/>
    </location>
    <ligand>
        <name>dihydroxyacetone phosphate</name>
        <dbReference type="ChEBI" id="CHEBI:57642"/>
    </ligand>
</feature>
<feature type="binding site" evidence="1">
    <location>
        <begin position="275"/>
        <end position="278"/>
    </location>
    <ligand>
        <name>dihydroxyacetone phosphate</name>
        <dbReference type="ChEBI" id="CHEBI:57642"/>
    </ligand>
</feature>
<accession>Q56815</accession>
<reference key="1">
    <citation type="journal article" date="1996" name="J. Bacteriol.">
        <title>Primary structure and phylogeny of the Calvin cycle enzymes transketolase and fructosebisphosphate aldolase of Xanthobacter flavus.</title>
        <authorList>
            <person name="van den Bergh E.R."/>
            <person name="Baker S.C."/>
            <person name="Raggers R.J."/>
            <person name="Terpstra P."/>
            <person name="Woudstra E.C."/>
            <person name="Dijkhuizen L."/>
            <person name="Meijer W.G."/>
        </authorList>
    </citation>
    <scope>NUCLEOTIDE SEQUENCE [GENOMIC DNA]</scope>
    <scope>FUNCTION</scope>
    <scope>CATALYTIC ACTIVITY</scope>
    <scope>ACTIVITY REGULATION</scope>
    <source>
        <strain>H4-14</strain>
    </source>
</reference>
<comment type="function">
    <text evidence="2">Catalyzes the aldol condensation of dihydroxyacetone phosphate (DHAP or glycerone-phosphate) with glyceraldehyde 3-phosphate (G3P) to form fructose 1,6-bisphosphate (FBP) in gluconeogenesis and the reverse reaction in glycolysis.</text>
</comment>
<comment type="catalytic activity">
    <reaction evidence="2">
        <text>beta-D-fructose 1,6-bisphosphate = D-glyceraldehyde 3-phosphate + dihydroxyacetone phosphate</text>
        <dbReference type="Rhea" id="RHEA:14729"/>
        <dbReference type="ChEBI" id="CHEBI:32966"/>
        <dbReference type="ChEBI" id="CHEBI:57642"/>
        <dbReference type="ChEBI" id="CHEBI:59776"/>
        <dbReference type="EC" id="4.1.2.13"/>
    </reaction>
</comment>
<comment type="cofactor">
    <cofactor evidence="1">
        <name>Zn(2+)</name>
        <dbReference type="ChEBI" id="CHEBI:29105"/>
    </cofactor>
    <text evidence="1">Binds 2 Zn(2+) ions per subunit. One is catalytic and the other provides a structural contribution.</text>
</comment>
<comment type="activity regulation">
    <text evidence="2">Activity is stimulated by Fe(2+) in autotrophically grown cells.</text>
</comment>
<comment type="pathway">
    <text>Carbohydrate biosynthesis; Calvin cycle.</text>
</comment>
<comment type="pathway">
    <text evidence="1">Carbohydrate degradation; glycolysis; D-glyceraldehyde 3-phosphate and glycerone phosphate from D-glucose: step 4/4.</text>
</comment>
<comment type="subunit">
    <text evidence="1">Homodimer.</text>
</comment>
<comment type="similarity">
    <text evidence="4">Belongs to the class II fructose-bisphosphate aldolase family.</text>
</comment>
<evidence type="ECO:0000250" key="1">
    <source>
        <dbReference type="UniProtKB" id="P0AB71"/>
    </source>
</evidence>
<evidence type="ECO:0000269" key="2">
    <source>
    </source>
</evidence>
<evidence type="ECO:0000303" key="3">
    <source>
    </source>
</evidence>
<evidence type="ECO:0000305" key="4"/>
<organism>
    <name type="scientific">Xanthobacter flavus</name>
    <dbReference type="NCBI Taxonomy" id="281"/>
    <lineage>
        <taxon>Bacteria</taxon>
        <taxon>Pseudomonadati</taxon>
        <taxon>Pseudomonadota</taxon>
        <taxon>Alphaproteobacteria</taxon>
        <taxon>Hyphomicrobiales</taxon>
        <taxon>Xanthobacteraceae</taxon>
        <taxon>Xanthobacter</taxon>
    </lineage>
</organism>
<dbReference type="EC" id="4.1.2.13" evidence="2"/>
<dbReference type="EMBL" id="U29134">
    <property type="protein sequence ID" value="AAA96742.1"/>
    <property type="molecule type" value="Genomic_DNA"/>
</dbReference>
<dbReference type="SMR" id="Q56815"/>
<dbReference type="UniPathway" id="UPA00109">
    <property type="reaction ID" value="UER00183"/>
</dbReference>
<dbReference type="UniPathway" id="UPA00116"/>
<dbReference type="GO" id="GO:0004332">
    <property type="term" value="F:fructose-bisphosphate aldolase activity"/>
    <property type="evidence" value="ECO:0007669"/>
    <property type="project" value="UniProtKB-EC"/>
</dbReference>
<dbReference type="GO" id="GO:0008270">
    <property type="term" value="F:zinc ion binding"/>
    <property type="evidence" value="ECO:0007669"/>
    <property type="project" value="InterPro"/>
</dbReference>
<dbReference type="GO" id="GO:0006096">
    <property type="term" value="P:glycolytic process"/>
    <property type="evidence" value="ECO:0007669"/>
    <property type="project" value="UniProtKB-UniPathway"/>
</dbReference>
<dbReference type="GO" id="GO:0019253">
    <property type="term" value="P:reductive pentose-phosphate cycle"/>
    <property type="evidence" value="ECO:0007669"/>
    <property type="project" value="UniProtKB-UniPathway"/>
</dbReference>
<dbReference type="CDD" id="cd00947">
    <property type="entry name" value="TBP_aldolase_IIB"/>
    <property type="match status" value="1"/>
</dbReference>
<dbReference type="FunFam" id="3.20.20.70:FF:000111">
    <property type="entry name" value="Fructose-1,6-bisphosphate aldolase"/>
    <property type="match status" value="1"/>
</dbReference>
<dbReference type="Gene3D" id="3.20.20.70">
    <property type="entry name" value="Aldolase class I"/>
    <property type="match status" value="1"/>
</dbReference>
<dbReference type="InterPro" id="IPR013785">
    <property type="entry name" value="Aldolase_TIM"/>
</dbReference>
<dbReference type="InterPro" id="IPR050246">
    <property type="entry name" value="Class_II_FBP_aldolase"/>
</dbReference>
<dbReference type="InterPro" id="IPR000771">
    <property type="entry name" value="FBA_II"/>
</dbReference>
<dbReference type="InterPro" id="IPR006412">
    <property type="entry name" value="Fruct_bisP_Calv"/>
</dbReference>
<dbReference type="NCBIfam" id="TIGR00167">
    <property type="entry name" value="cbbA"/>
    <property type="match status" value="1"/>
</dbReference>
<dbReference type="NCBIfam" id="TIGR01521">
    <property type="entry name" value="FruBisAldo_II_B"/>
    <property type="match status" value="1"/>
</dbReference>
<dbReference type="PANTHER" id="PTHR30304">
    <property type="entry name" value="D-TAGATOSE-1,6-BISPHOSPHATE ALDOLASE"/>
    <property type="match status" value="1"/>
</dbReference>
<dbReference type="PANTHER" id="PTHR30304:SF0">
    <property type="entry name" value="D-TAGATOSE-1,6-BISPHOSPHATE ALDOLASE SUBUNIT GATY-RELATED"/>
    <property type="match status" value="1"/>
</dbReference>
<dbReference type="Pfam" id="PF01116">
    <property type="entry name" value="F_bP_aldolase"/>
    <property type="match status" value="1"/>
</dbReference>
<dbReference type="PIRSF" id="PIRSF001359">
    <property type="entry name" value="F_bP_aldolase_II"/>
    <property type="match status" value="1"/>
</dbReference>
<dbReference type="SUPFAM" id="SSF51569">
    <property type="entry name" value="Aldolase"/>
    <property type="match status" value="1"/>
</dbReference>
<dbReference type="PROSITE" id="PS00602">
    <property type="entry name" value="ALDOLASE_CLASS_II_1"/>
    <property type="match status" value="1"/>
</dbReference>
<dbReference type="PROSITE" id="PS00806">
    <property type="entry name" value="ALDOLASE_CLASS_II_2"/>
    <property type="match status" value="1"/>
</dbReference>
<name>ALF_XANFL</name>
<protein>
    <recommendedName>
        <fullName evidence="3">Fructose-bisphosphate aldolase</fullName>
        <shortName>FBP aldolase</shortName>
        <shortName>FBPA</shortName>
        <ecNumber evidence="2">4.1.2.13</ecNumber>
    </recommendedName>
    <alternativeName>
        <fullName>Fructose-1,6-bisphosphate aldolase</fullName>
    </alternativeName>
</protein>
<sequence>MALVSMRQLLDHAADDSYGLPAFNVNNMEQVKAIMDAARATSSPVILQGSAGARKYAGEPFLRHLIAAAVEAYPEIPVVMHQDHGASPAVCMGAIKSGFSSVMMDGSLKEDGKTPADYDYNVSVTAKVVELAHAVGVSVEGELGCLGSLETGKGEAEDGHGAEEALDHSKLLTDPDEAAQFVKATQCDALAIAIGTSHGAYKFTRKPTGDILAIDRIKAIHQRIPTTHLVMHGSSSVPQELLEEIRTYGGDIKETYGVPVEEIQEGIRYGVRKVNIDTDIRLAMTAAIRRVGAKNKSEFDPRKFMAAAMEEAKKVCIARFEAFGSAGKAEKIRAIELDEMAKRYASGELAQVVH</sequence>
<proteinExistence type="evidence at protein level"/>
<gene>
    <name evidence="3" type="primary">cbbA</name>
</gene>
<keyword id="KW-0113">Calvin cycle</keyword>
<keyword id="KW-0324">Glycolysis</keyword>
<keyword id="KW-0456">Lyase</keyword>
<keyword id="KW-0479">Metal-binding</keyword>
<keyword id="KW-0862">Zinc</keyword>